<evidence type="ECO:0000255" key="1">
    <source>
        <dbReference type="HAMAP-Rule" id="MF_02057"/>
    </source>
</evidence>
<evidence type="ECO:0000269" key="2">
    <source ref="5"/>
</evidence>
<evidence type="ECO:0000312" key="3">
    <source>
        <dbReference type="EMBL" id="AAG55406.1"/>
    </source>
</evidence>
<evidence type="ECO:0000312" key="4">
    <source>
        <dbReference type="EMBL" id="ALH89716.1"/>
    </source>
</evidence>
<evidence type="ECO:0000312" key="5">
    <source>
        <dbReference type="EMBL" id="BAB34427.1"/>
    </source>
</evidence>
<evidence type="ECO:0000312" key="6">
    <source>
        <dbReference type="EMBL" id="KRQ16836.1"/>
    </source>
</evidence>
<evidence type="ECO:0007744" key="7">
    <source>
        <dbReference type="PDB" id="4HTF"/>
    </source>
</evidence>
<evidence type="ECO:0007829" key="8">
    <source>
        <dbReference type="PDB" id="4HTF"/>
    </source>
</evidence>
<name>CMOM_ECO57</name>
<comment type="function">
    <text evidence="1">Catalyzes the methylation of 5-carboxymethoxyuridine (cmo5U) to form 5-methoxycarbonylmethoxyuridine (mcmo5U) at position 34 in tRNAs.</text>
</comment>
<comment type="catalytic activity">
    <reaction evidence="1">
        <text>5-carboxymethoxyuridine(34) in tRNA + S-adenosyl-L-methionine = 5-methoxycarbonylmethoxyuridine(34) in tRNA + S-adenosyl-L-homocysteine</text>
        <dbReference type="Rhea" id="RHEA:54080"/>
        <dbReference type="Rhea" id="RHEA-COMP:13383"/>
        <dbReference type="Rhea" id="RHEA-COMP:13781"/>
        <dbReference type="ChEBI" id="CHEBI:57856"/>
        <dbReference type="ChEBI" id="CHEBI:59789"/>
        <dbReference type="ChEBI" id="CHEBI:136879"/>
        <dbReference type="ChEBI" id="CHEBI:138053"/>
    </reaction>
</comment>
<comment type="subunit">
    <text evidence="2">Homodimer.</text>
</comment>
<comment type="similarity">
    <text evidence="1">Belongs to the class I-like SAM-binding methyltransferase superfamily. CmoM family.</text>
</comment>
<accession>Q8XDG3</accession>
<accession>Q7AG53</accession>
<reference key="1">
    <citation type="journal article" date="2001" name="DNA Res.">
        <title>Complete genome sequence of enterohemorrhagic Escherichia coli O157:H7 and genomic comparison with a laboratory strain K-12.</title>
        <authorList>
            <person name="Hayashi T."/>
            <person name="Makino K."/>
            <person name="Ohnishi M."/>
            <person name="Kurokawa K."/>
            <person name="Ishii K."/>
            <person name="Yokoyama K."/>
            <person name="Han C.-G."/>
            <person name="Ohtsubo E."/>
            <person name="Nakayama K."/>
            <person name="Murata T."/>
            <person name="Tanaka M."/>
            <person name="Tobe T."/>
            <person name="Iida T."/>
            <person name="Takami H."/>
            <person name="Honda T."/>
            <person name="Sasakawa C."/>
            <person name="Ogasawara N."/>
            <person name="Yasunaga T."/>
            <person name="Kuhara S."/>
            <person name="Shiba T."/>
            <person name="Hattori M."/>
            <person name="Shinagawa H."/>
        </authorList>
    </citation>
    <scope>NUCLEOTIDE SEQUENCE [LARGE SCALE GENOMIC DNA]</scope>
    <source>
        <strain>O157:H7 / Sakai / RIMD 0509952 / EHEC</strain>
    </source>
</reference>
<reference key="2">
    <citation type="journal article" date="2001" name="Nature">
        <title>Genome sequence of enterohaemorrhagic Escherichia coli O157:H7.</title>
        <authorList>
            <person name="Perna N.T."/>
            <person name="Plunkett G. III"/>
            <person name="Burland V."/>
            <person name="Mau B."/>
            <person name="Glasner J.D."/>
            <person name="Rose D.J."/>
            <person name="Mayhew G.F."/>
            <person name="Evans P.S."/>
            <person name="Gregor J."/>
            <person name="Kirkpatrick H.A."/>
            <person name="Posfai G."/>
            <person name="Hackett J."/>
            <person name="Klink S."/>
            <person name="Boutin A."/>
            <person name="Shao Y."/>
            <person name="Miller L."/>
            <person name="Grotbeck E.J."/>
            <person name="Davis N.W."/>
            <person name="Lim A."/>
            <person name="Dimalanta E.T."/>
            <person name="Potamousis K."/>
            <person name="Apodaca J."/>
            <person name="Anantharaman T.S."/>
            <person name="Lin J."/>
            <person name="Yen G."/>
            <person name="Schwartz D.C."/>
            <person name="Welch R.A."/>
            <person name="Blattner F.R."/>
        </authorList>
    </citation>
    <scope>NUCLEOTIDE SEQUENCE [LARGE SCALE GENOMIC DNA]</scope>
    <source>
        <strain>O157:H7 / EDL933 / ATCC 700927 / EHEC</strain>
    </source>
</reference>
<reference key="3">
    <citation type="submission" date="2015-09" db="EMBL/GenBank/DDBJ databases">
        <title>Draft genome sequence of three European lab-derivates from the enterohemorrhagic E. coli O157:H7 strain EDL933, including two plasmids.</title>
        <authorList>
            <person name="Fellner L."/>
            <person name="Huptas C."/>
            <person name="Simon S."/>
            <person name="Krementowski A."/>
            <person name="Scherer S."/>
            <person name="Neuhaus K."/>
        </authorList>
    </citation>
    <scope>NUCLEOTIDE SEQUENCE [LARGE SCALE GENOMIC DNA]</scope>
    <source>
        <strain>O157:H7 / WS4202</strain>
    </source>
</reference>
<reference key="4">
    <citation type="submission" date="2015-11" db="EMBL/GenBank/DDBJ databases">
        <title>Genome sequence of Escherichia coli O157:H7 strains isolated from cattle in Javadabad, Iran.</title>
        <authorList>
            <person name="Staji H."/>
            <person name="Salehi T.Z."/>
            <person name="Orsini M."/>
            <person name="Tonelli A."/>
        </authorList>
    </citation>
    <scope>NUCLEOTIDE SEQUENCE [LARGE SCALE GENOMIC DNA]</scope>
    <source>
        <strain>O157:H7 / G10</strain>
    </source>
</reference>
<reference evidence="7" key="5">
    <citation type="submission" date="2012-11" db="PDB data bank">
        <title>Crystal structure of S-adenosylmethionine-dependent methyltransferase from Escherichia coli in complex with S-adenosylmethionine.</title>
        <authorList>
            <person name="Filippova E.V."/>
            <person name="Minasov G."/>
            <person name="Shuvalova L."/>
            <person name="Kiryukhina O."/>
            <person name="Jedrzejczak R."/>
            <person name="Joachimiak A."/>
            <person name="Anderson W.F."/>
        </authorList>
    </citation>
    <scope>X-RAY CRYSTALLOGRAPHY (1.60 ANGSTROMS) IN COMPLEX WITH S-ADENOSYL-L-METHIONINE</scope>
    <scope>SUBUNIT</scope>
</reference>
<proteinExistence type="evidence at protein level"/>
<dbReference type="EC" id="2.1.1.-" evidence="1"/>
<dbReference type="EMBL" id="AE005174">
    <property type="protein sequence ID" value="AAG55406.1"/>
    <property type="molecule type" value="Genomic_DNA"/>
</dbReference>
<dbReference type="EMBL" id="BA000007">
    <property type="protein sequence ID" value="BAB34427.1"/>
    <property type="molecule type" value="Genomic_DNA"/>
</dbReference>
<dbReference type="EMBL" id="CP012802">
    <property type="protein sequence ID" value="ALH89716.1"/>
    <property type="molecule type" value="Genomic_DNA"/>
</dbReference>
<dbReference type="EMBL" id="LMXL01000002">
    <property type="protein sequence ID" value="KRQ16836.1"/>
    <property type="molecule type" value="Genomic_DNA"/>
</dbReference>
<dbReference type="PIR" id="B85618">
    <property type="entry name" value="B85618"/>
</dbReference>
<dbReference type="PIR" id="D90754">
    <property type="entry name" value="D90754"/>
</dbReference>
<dbReference type="RefSeq" id="NP_309031.1">
    <property type="nucleotide sequence ID" value="NC_002695.1"/>
</dbReference>
<dbReference type="RefSeq" id="WP_001301572.1">
    <property type="nucleotide sequence ID" value="NZ_VOAI01000006.1"/>
</dbReference>
<dbReference type="PDB" id="4HTF">
    <property type="method" value="X-ray"/>
    <property type="resolution" value="1.60 A"/>
    <property type="chains" value="A/B=1-261"/>
</dbReference>
<dbReference type="PDBsum" id="4HTF"/>
<dbReference type="SMR" id="Q8XDG3"/>
<dbReference type="STRING" id="155864.Z1268"/>
<dbReference type="DNASU" id="917747"/>
<dbReference type="GeneID" id="917747"/>
<dbReference type="KEGG" id="ece:Z1268"/>
<dbReference type="KEGG" id="ecs:ECs_1004"/>
<dbReference type="PATRIC" id="fig|386585.9.peg.1124"/>
<dbReference type="eggNOG" id="COG2227">
    <property type="taxonomic scope" value="Bacteria"/>
</dbReference>
<dbReference type="HOGENOM" id="CLU_061533_0_1_6"/>
<dbReference type="OMA" id="CHGVLEY"/>
<dbReference type="EvolutionaryTrace" id="Q8XDG3"/>
<dbReference type="Proteomes" id="UP000000558">
    <property type="component" value="Chromosome"/>
</dbReference>
<dbReference type="Proteomes" id="UP000002519">
    <property type="component" value="Chromosome"/>
</dbReference>
<dbReference type="GO" id="GO:0097697">
    <property type="term" value="F:tRNA (5-carboxymethoxyuridine(34)-5-O)-methyltransferase activity"/>
    <property type="evidence" value="ECO:0007669"/>
    <property type="project" value="UniProtKB-UniRule"/>
</dbReference>
<dbReference type="GO" id="GO:0032259">
    <property type="term" value="P:methylation"/>
    <property type="evidence" value="ECO:0007669"/>
    <property type="project" value="UniProtKB-KW"/>
</dbReference>
<dbReference type="GO" id="GO:0006400">
    <property type="term" value="P:tRNA modification"/>
    <property type="evidence" value="ECO:0007669"/>
    <property type="project" value="UniProtKB-UniRule"/>
</dbReference>
<dbReference type="CDD" id="cd02440">
    <property type="entry name" value="AdoMet_MTases"/>
    <property type="match status" value="1"/>
</dbReference>
<dbReference type="FunFam" id="3.40.50.150:FF:000091">
    <property type="entry name" value="tRNA 5-carboxymethoxyuridine methyltransferase"/>
    <property type="match status" value="1"/>
</dbReference>
<dbReference type="Gene3D" id="3.40.50.150">
    <property type="entry name" value="Vaccinia Virus protein VP39"/>
    <property type="match status" value="1"/>
</dbReference>
<dbReference type="HAMAP" id="MF_02057">
    <property type="entry name" value="tRNA_methyltr_CmoM"/>
    <property type="match status" value="1"/>
</dbReference>
<dbReference type="InterPro" id="IPR033664">
    <property type="entry name" value="Cmo5U_methylTrfase"/>
</dbReference>
<dbReference type="InterPro" id="IPR025714">
    <property type="entry name" value="Methyltranfer_dom"/>
</dbReference>
<dbReference type="InterPro" id="IPR029063">
    <property type="entry name" value="SAM-dependent_MTases_sf"/>
</dbReference>
<dbReference type="NCBIfam" id="NF008264">
    <property type="entry name" value="PRK11036.1"/>
    <property type="match status" value="1"/>
</dbReference>
<dbReference type="PANTHER" id="PTHR43861">
    <property type="entry name" value="TRANS-ACONITATE 2-METHYLTRANSFERASE-RELATED"/>
    <property type="match status" value="1"/>
</dbReference>
<dbReference type="Pfam" id="PF13847">
    <property type="entry name" value="Methyltransf_31"/>
    <property type="match status" value="1"/>
</dbReference>
<dbReference type="SUPFAM" id="SSF53335">
    <property type="entry name" value="S-adenosyl-L-methionine-dependent methyltransferases"/>
    <property type="match status" value="1"/>
</dbReference>
<organism>
    <name type="scientific">Escherichia coli O157:H7</name>
    <dbReference type="NCBI Taxonomy" id="83334"/>
    <lineage>
        <taxon>Bacteria</taxon>
        <taxon>Pseudomonadati</taxon>
        <taxon>Pseudomonadota</taxon>
        <taxon>Gammaproteobacteria</taxon>
        <taxon>Enterobacterales</taxon>
        <taxon>Enterobacteriaceae</taxon>
        <taxon>Escherichia</taxon>
    </lineage>
</organism>
<keyword id="KW-0002">3D-structure</keyword>
<keyword id="KW-0489">Methyltransferase</keyword>
<keyword id="KW-1185">Reference proteome</keyword>
<keyword id="KW-0949">S-adenosyl-L-methionine</keyword>
<keyword id="KW-0808">Transferase</keyword>
<keyword id="KW-0819">tRNA processing</keyword>
<gene>
    <name evidence="1" type="primary">cmoM</name>
    <name evidence="3" type="synonym">smtA</name>
    <name evidence="5" type="ordered locus">ECs1004</name>
    <name evidence="3" type="ordered locus">Z1268</name>
    <name evidence="4" type="ORF">AO055_05240</name>
    <name evidence="6" type="ORF">ASO15_05275</name>
</gene>
<sequence>MQDRNFDDIAEKFSRNIYGTTKGQLRQAILWQDLDRVLAEMGPQKLRVLDAGGGEGQTAIKMAERGHQVILCDLSAQMIDRAKQAAEAKGVSDNMQFIHCAAQDVASHLETPVDLILFHAVLEWVADPRSVLQTLWSVLRPGGVLSLMFYNAHGLLMHNMVAGNFDYVQAGMPKKKKRTLSPDYPRDPTQVYLWLEEAGWQIMGKTGVRVFHDYLREKHQQRDCYEALLELETRYCRQEPYITLGRYIHVTARKPQSKDKV</sequence>
<protein>
    <recommendedName>
        <fullName evidence="1">tRNA 5-carboxymethoxyuridine methyltransferase</fullName>
        <ecNumber evidence="1">2.1.1.-</ecNumber>
    </recommendedName>
    <alternativeName>
        <fullName evidence="1">cmo5U methyltransferase</fullName>
    </alternativeName>
</protein>
<feature type="chain" id="PRO_0000436068" description="tRNA 5-carboxymethoxyuridine methyltransferase">
    <location>
        <begin position="1"/>
        <end position="261"/>
    </location>
</feature>
<feature type="binding site" evidence="1 2 7">
    <location>
        <position position="26"/>
    </location>
    <ligand>
        <name>S-adenosyl-L-methionine</name>
        <dbReference type="ChEBI" id="CHEBI:59789"/>
    </ligand>
</feature>
<feature type="binding site" evidence="1 2 7">
    <location>
        <begin position="52"/>
        <end position="53"/>
    </location>
    <ligand>
        <name>S-adenosyl-L-methionine</name>
        <dbReference type="ChEBI" id="CHEBI:59789"/>
    </ligand>
</feature>
<feature type="binding site" evidence="1 2 7">
    <location>
        <position position="73"/>
    </location>
    <ligand>
        <name>S-adenosyl-L-methionine</name>
        <dbReference type="ChEBI" id="CHEBI:59789"/>
    </ligand>
</feature>
<feature type="binding site" evidence="1 2 7">
    <location>
        <begin position="102"/>
        <end position="103"/>
    </location>
    <ligand>
        <name>S-adenosyl-L-methionine</name>
        <dbReference type="ChEBI" id="CHEBI:59789"/>
    </ligand>
</feature>
<feature type="binding site" evidence="1 2 7">
    <location>
        <position position="119"/>
    </location>
    <ligand>
        <name>S-adenosyl-L-methionine</name>
        <dbReference type="ChEBI" id="CHEBI:59789"/>
    </ligand>
</feature>
<feature type="helix" evidence="8">
    <location>
        <begin position="6"/>
        <end position="8"/>
    </location>
</feature>
<feature type="helix" evidence="8">
    <location>
        <begin position="9"/>
        <end position="14"/>
    </location>
</feature>
<feature type="helix" evidence="8">
    <location>
        <begin position="21"/>
        <end position="40"/>
    </location>
</feature>
<feature type="strand" evidence="8">
    <location>
        <begin position="47"/>
        <end position="51"/>
    </location>
</feature>
<feature type="helix" evidence="8">
    <location>
        <begin position="57"/>
        <end position="64"/>
    </location>
</feature>
<feature type="strand" evidence="8">
    <location>
        <begin position="68"/>
        <end position="74"/>
    </location>
</feature>
<feature type="helix" evidence="8">
    <location>
        <begin position="76"/>
        <end position="87"/>
    </location>
</feature>
<feature type="helix" evidence="8">
    <location>
        <begin position="92"/>
        <end position="94"/>
    </location>
</feature>
<feature type="strand" evidence="8">
    <location>
        <begin position="95"/>
        <end position="100"/>
    </location>
</feature>
<feature type="helix" evidence="8">
    <location>
        <begin position="102"/>
        <end position="104"/>
    </location>
</feature>
<feature type="helix" evidence="8">
    <location>
        <begin position="106"/>
        <end position="108"/>
    </location>
</feature>
<feature type="strand" evidence="8">
    <location>
        <begin position="113"/>
        <end position="120"/>
    </location>
</feature>
<feature type="helix" evidence="8">
    <location>
        <begin position="122"/>
        <end position="124"/>
    </location>
</feature>
<feature type="helix" evidence="8">
    <location>
        <begin position="128"/>
        <end position="137"/>
    </location>
</feature>
<feature type="strand" evidence="8">
    <location>
        <begin position="139"/>
        <end position="151"/>
    </location>
</feature>
<feature type="helix" evidence="8">
    <location>
        <begin position="152"/>
        <end position="161"/>
    </location>
</feature>
<feature type="helix" evidence="8">
    <location>
        <begin position="165"/>
        <end position="169"/>
    </location>
</feature>
<feature type="helix" evidence="8">
    <location>
        <begin position="188"/>
        <end position="197"/>
    </location>
</feature>
<feature type="strand" evidence="8">
    <location>
        <begin position="201"/>
        <end position="211"/>
    </location>
</feature>
<feature type="helix" evidence="8">
    <location>
        <begin position="212"/>
        <end position="214"/>
    </location>
</feature>
<feature type="helix" evidence="8">
    <location>
        <begin position="220"/>
        <end position="223"/>
    </location>
</feature>
<feature type="helix" evidence="8">
    <location>
        <begin position="225"/>
        <end position="235"/>
    </location>
</feature>
<feature type="helix" evidence="8">
    <location>
        <begin position="241"/>
        <end position="244"/>
    </location>
</feature>
<feature type="strand" evidence="8">
    <location>
        <begin position="246"/>
        <end position="253"/>
    </location>
</feature>